<dbReference type="EMBL" id="CP000440">
    <property type="protein sequence ID" value="ABI86013.1"/>
    <property type="molecule type" value="Genomic_DNA"/>
</dbReference>
<dbReference type="RefSeq" id="WP_006752433.1">
    <property type="nucleotide sequence ID" value="NZ_CP009798.1"/>
</dbReference>
<dbReference type="SMR" id="Q0BIL0"/>
<dbReference type="GeneID" id="93084129"/>
<dbReference type="KEGG" id="bam:Bamb_0454"/>
<dbReference type="PATRIC" id="fig|339670.21.peg.1152"/>
<dbReference type="eggNOG" id="COG2001">
    <property type="taxonomic scope" value="Bacteria"/>
</dbReference>
<dbReference type="Proteomes" id="UP000000662">
    <property type="component" value="Chromosome 1"/>
</dbReference>
<dbReference type="GO" id="GO:0005737">
    <property type="term" value="C:cytoplasm"/>
    <property type="evidence" value="ECO:0007669"/>
    <property type="project" value="UniProtKB-UniRule"/>
</dbReference>
<dbReference type="GO" id="GO:0009295">
    <property type="term" value="C:nucleoid"/>
    <property type="evidence" value="ECO:0007669"/>
    <property type="project" value="UniProtKB-SubCell"/>
</dbReference>
<dbReference type="GO" id="GO:0003700">
    <property type="term" value="F:DNA-binding transcription factor activity"/>
    <property type="evidence" value="ECO:0007669"/>
    <property type="project" value="UniProtKB-UniRule"/>
</dbReference>
<dbReference type="GO" id="GO:0000976">
    <property type="term" value="F:transcription cis-regulatory region binding"/>
    <property type="evidence" value="ECO:0007669"/>
    <property type="project" value="TreeGrafter"/>
</dbReference>
<dbReference type="GO" id="GO:2000143">
    <property type="term" value="P:negative regulation of DNA-templated transcription initiation"/>
    <property type="evidence" value="ECO:0007669"/>
    <property type="project" value="TreeGrafter"/>
</dbReference>
<dbReference type="CDD" id="cd16321">
    <property type="entry name" value="MraZ_C"/>
    <property type="match status" value="1"/>
</dbReference>
<dbReference type="CDD" id="cd16320">
    <property type="entry name" value="MraZ_N"/>
    <property type="match status" value="1"/>
</dbReference>
<dbReference type="Gene3D" id="3.40.1550.20">
    <property type="entry name" value="Transcriptional regulator MraZ domain"/>
    <property type="match status" value="1"/>
</dbReference>
<dbReference type="HAMAP" id="MF_01008">
    <property type="entry name" value="MraZ"/>
    <property type="match status" value="1"/>
</dbReference>
<dbReference type="InterPro" id="IPR003444">
    <property type="entry name" value="MraZ"/>
</dbReference>
<dbReference type="InterPro" id="IPR035644">
    <property type="entry name" value="MraZ_C"/>
</dbReference>
<dbReference type="InterPro" id="IPR020603">
    <property type="entry name" value="MraZ_dom"/>
</dbReference>
<dbReference type="InterPro" id="IPR035642">
    <property type="entry name" value="MraZ_N"/>
</dbReference>
<dbReference type="InterPro" id="IPR038619">
    <property type="entry name" value="MraZ_sf"/>
</dbReference>
<dbReference type="InterPro" id="IPR007159">
    <property type="entry name" value="SpoVT-AbrB_dom"/>
</dbReference>
<dbReference type="InterPro" id="IPR037914">
    <property type="entry name" value="SpoVT-AbrB_sf"/>
</dbReference>
<dbReference type="NCBIfam" id="TIGR00242">
    <property type="entry name" value="division/cell wall cluster transcriptional repressor MraZ"/>
    <property type="match status" value="1"/>
</dbReference>
<dbReference type="PANTHER" id="PTHR34701">
    <property type="entry name" value="TRANSCRIPTIONAL REGULATOR MRAZ"/>
    <property type="match status" value="1"/>
</dbReference>
<dbReference type="PANTHER" id="PTHR34701:SF1">
    <property type="entry name" value="TRANSCRIPTIONAL REGULATOR MRAZ"/>
    <property type="match status" value="1"/>
</dbReference>
<dbReference type="Pfam" id="PF02381">
    <property type="entry name" value="MraZ"/>
    <property type="match status" value="2"/>
</dbReference>
<dbReference type="SUPFAM" id="SSF89447">
    <property type="entry name" value="AbrB/MazE/MraZ-like"/>
    <property type="match status" value="1"/>
</dbReference>
<dbReference type="PROSITE" id="PS51740">
    <property type="entry name" value="SPOVT_ABRB"/>
    <property type="match status" value="2"/>
</dbReference>
<feature type="chain" id="PRO_1000062852" description="Transcriptional regulator MraZ">
    <location>
        <begin position="1"/>
        <end position="142"/>
    </location>
</feature>
<feature type="domain" description="SpoVT-AbrB 1" evidence="2">
    <location>
        <begin position="5"/>
        <end position="51"/>
    </location>
</feature>
<feature type="domain" description="SpoVT-AbrB 2" evidence="2">
    <location>
        <begin position="77"/>
        <end position="120"/>
    </location>
</feature>
<keyword id="KW-0963">Cytoplasm</keyword>
<keyword id="KW-0238">DNA-binding</keyword>
<keyword id="KW-0677">Repeat</keyword>
<keyword id="KW-0804">Transcription</keyword>
<keyword id="KW-0805">Transcription regulation</keyword>
<comment type="subunit">
    <text evidence="1">Forms oligomers.</text>
</comment>
<comment type="subcellular location">
    <subcellularLocation>
        <location evidence="1">Cytoplasm</location>
        <location evidence="1">Nucleoid</location>
    </subcellularLocation>
</comment>
<comment type="similarity">
    <text evidence="1">Belongs to the MraZ family.</text>
</comment>
<proteinExistence type="inferred from homology"/>
<gene>
    <name evidence="1" type="primary">mraZ</name>
    <name type="ordered locus">Bamb_0454</name>
</gene>
<accession>Q0BIL0</accession>
<sequence length="142" mass="15884">MFQGASALTLDAKGRMSVPSRYREALQGQAEGRVTVTKHPDGCLLLFPRPEWEVFRAKIAALPMDAHWWRRIFLGNAMDVDLDSAGRILVSPELRMAAGLEKEVMLLGMGSHFELWDSQTYIAKEQAAMAQGMPDALKNFTF</sequence>
<evidence type="ECO:0000255" key="1">
    <source>
        <dbReference type="HAMAP-Rule" id="MF_01008"/>
    </source>
</evidence>
<evidence type="ECO:0000255" key="2">
    <source>
        <dbReference type="PROSITE-ProRule" id="PRU01076"/>
    </source>
</evidence>
<organism>
    <name type="scientific">Burkholderia ambifaria (strain ATCC BAA-244 / DSM 16087 / CCUG 44356 / LMG 19182 / AMMD)</name>
    <name type="common">Burkholderia cepacia (strain AMMD)</name>
    <dbReference type="NCBI Taxonomy" id="339670"/>
    <lineage>
        <taxon>Bacteria</taxon>
        <taxon>Pseudomonadati</taxon>
        <taxon>Pseudomonadota</taxon>
        <taxon>Betaproteobacteria</taxon>
        <taxon>Burkholderiales</taxon>
        <taxon>Burkholderiaceae</taxon>
        <taxon>Burkholderia</taxon>
        <taxon>Burkholderia cepacia complex</taxon>
    </lineage>
</organism>
<reference key="1">
    <citation type="submission" date="2006-08" db="EMBL/GenBank/DDBJ databases">
        <title>Complete sequence of chromosome 1 of Burkholderia cepacia AMMD.</title>
        <authorList>
            <person name="Copeland A."/>
            <person name="Lucas S."/>
            <person name="Lapidus A."/>
            <person name="Barry K."/>
            <person name="Detter J.C."/>
            <person name="Glavina del Rio T."/>
            <person name="Hammon N."/>
            <person name="Israni S."/>
            <person name="Pitluck S."/>
            <person name="Bruce D."/>
            <person name="Chain P."/>
            <person name="Malfatti S."/>
            <person name="Shin M."/>
            <person name="Vergez L."/>
            <person name="Schmutz J."/>
            <person name="Larimer F."/>
            <person name="Land M."/>
            <person name="Hauser L."/>
            <person name="Kyrpides N."/>
            <person name="Kim E."/>
            <person name="Parke J."/>
            <person name="Coenye T."/>
            <person name="Konstantinidis K."/>
            <person name="Ramette A."/>
            <person name="Tiedje J."/>
            <person name="Richardson P."/>
        </authorList>
    </citation>
    <scope>NUCLEOTIDE SEQUENCE [LARGE SCALE GENOMIC DNA]</scope>
    <source>
        <strain>ATCC BAA-244 / DSM 16087 / CCUG 44356 / LMG 19182 / AMMD</strain>
    </source>
</reference>
<protein>
    <recommendedName>
        <fullName>Transcriptional regulator MraZ</fullName>
    </recommendedName>
</protein>
<name>MRAZ_BURCM</name>